<reference key="1">
    <citation type="journal article" date="2002" name="Lancet">
        <title>Genome and virulence determinants of high virulence community-acquired MRSA.</title>
        <authorList>
            <person name="Baba T."/>
            <person name="Takeuchi F."/>
            <person name="Kuroda M."/>
            <person name="Yuzawa H."/>
            <person name="Aoki K."/>
            <person name="Oguchi A."/>
            <person name="Nagai Y."/>
            <person name="Iwama N."/>
            <person name="Asano K."/>
            <person name="Naimi T."/>
            <person name="Kuroda H."/>
            <person name="Cui L."/>
            <person name="Yamamoto K."/>
            <person name="Hiramatsu K."/>
        </authorList>
    </citation>
    <scope>NUCLEOTIDE SEQUENCE [LARGE SCALE GENOMIC DNA]</scope>
    <source>
        <strain>MW2</strain>
    </source>
</reference>
<accession>P64147</accession>
<accession>Q99W88</accession>
<comment type="function">
    <text evidence="3">Catalyzes the conversion of 7,8-dihydroneopterin to 6-hydroxymethyl-7,8-dihydropterin. Can also catalyze the epimerization of carbon 2' of dihydroneopterin to dihydromonapterin.</text>
</comment>
<comment type="catalytic activity">
    <reaction evidence="3">
        <text>7,8-dihydroneopterin = 6-hydroxymethyl-7,8-dihydropterin + glycolaldehyde</text>
        <dbReference type="Rhea" id="RHEA:10540"/>
        <dbReference type="ChEBI" id="CHEBI:17001"/>
        <dbReference type="ChEBI" id="CHEBI:17071"/>
        <dbReference type="ChEBI" id="CHEBI:44841"/>
        <dbReference type="EC" id="4.1.2.25"/>
    </reaction>
</comment>
<comment type="catalytic activity">
    <reaction evidence="2">
        <text>7,8-dihydroneopterin = 7,8-dihydromonapterin</text>
        <dbReference type="Rhea" id="RHEA:45328"/>
        <dbReference type="ChEBI" id="CHEBI:17001"/>
        <dbReference type="ChEBI" id="CHEBI:71175"/>
        <dbReference type="EC" id="5.1.99.8"/>
    </reaction>
</comment>
<comment type="pathway">
    <text>Cofactor biosynthesis; tetrahydrofolate biosynthesis; 2-amino-4-hydroxy-6-hydroxymethyl-7,8-dihydropteridine diphosphate from 7,8-dihydroneopterin triphosphate: step 3/4.</text>
</comment>
<comment type="subunit">
    <text evidence="1">Homooctamer. Four molecules assemble into a ring, and two rings come together to give a cylinder with a hole of at least 13 a diameter (By similarity).</text>
</comment>
<comment type="similarity">
    <text evidence="4">Belongs to the DHNA family.</text>
</comment>
<sequence length="121" mass="13735">MQDTIFLKGMRFYGYHGALSAENEIGQIFKVDVTLKVDLAEAGRTDNVIDTVHYGEVFEEVKSIMEGKAVNLLEHLAERIANRINSQYNRVMETKVRITKENPPIPGHYDGVGIEIVRENK</sequence>
<feature type="chain" id="PRO_0000168282" description="Dihydroneopterin aldolase">
    <location>
        <begin position="1"/>
        <end position="121"/>
    </location>
</feature>
<feature type="active site" description="Proton donor/acceptor" evidence="3">
    <location>
        <position position="100"/>
    </location>
</feature>
<feature type="binding site" evidence="3">
    <location>
        <position position="22"/>
    </location>
    <ligand>
        <name>substrate</name>
    </ligand>
</feature>
<feature type="binding site" evidence="3">
    <location>
        <position position="54"/>
    </location>
    <ligand>
        <name>substrate</name>
    </ligand>
</feature>
<feature type="binding site" evidence="3">
    <location>
        <begin position="73"/>
        <end position="74"/>
    </location>
    <ligand>
        <name>substrate</name>
    </ligand>
</feature>
<keyword id="KW-0289">Folate biosynthesis</keyword>
<keyword id="KW-0413">Isomerase</keyword>
<keyword id="KW-0456">Lyase</keyword>
<evidence type="ECO:0000250" key="1"/>
<evidence type="ECO:0000250" key="2">
    <source>
        <dbReference type="UniProtKB" id="P0AC16"/>
    </source>
</evidence>
<evidence type="ECO:0000250" key="3">
    <source>
        <dbReference type="UniProtKB" id="P56740"/>
    </source>
</evidence>
<evidence type="ECO:0000305" key="4"/>
<protein>
    <recommendedName>
        <fullName>Dihydroneopterin aldolase</fullName>
        <shortName>DHNA</shortName>
        <ecNumber evidence="2">4.1.2.25</ecNumber>
    </recommendedName>
    <alternativeName>
        <fullName>7,8-dihydroneopterin 2'-epimerase</fullName>
    </alternativeName>
    <alternativeName>
        <fullName>7,8-dihydroneopterin aldolase</fullName>
    </alternativeName>
    <alternativeName>
        <fullName>7,8-dihydroneopterin epimerase</fullName>
        <ecNumber evidence="2">5.1.99.8</ecNumber>
    </alternativeName>
    <alternativeName>
        <fullName>Dihydroneopterin epimerase</fullName>
    </alternativeName>
</protein>
<organism>
    <name type="scientific">Staphylococcus aureus (strain MW2)</name>
    <dbReference type="NCBI Taxonomy" id="196620"/>
    <lineage>
        <taxon>Bacteria</taxon>
        <taxon>Bacillati</taxon>
        <taxon>Bacillota</taxon>
        <taxon>Bacilli</taxon>
        <taxon>Bacillales</taxon>
        <taxon>Staphylococcaceae</taxon>
        <taxon>Staphylococcus</taxon>
    </lineage>
</organism>
<proteinExistence type="inferred from homology"/>
<name>FOLB_STAAW</name>
<dbReference type="EC" id="4.1.2.25" evidence="2"/>
<dbReference type="EC" id="5.1.99.8" evidence="2"/>
<dbReference type="EMBL" id="BA000033">
    <property type="protein sequence ID" value="BAB94335.1"/>
    <property type="molecule type" value="Genomic_DNA"/>
</dbReference>
<dbReference type="RefSeq" id="WP_001154302.1">
    <property type="nucleotide sequence ID" value="NC_003923.1"/>
</dbReference>
<dbReference type="BMRB" id="P64147"/>
<dbReference type="SMR" id="P64147"/>
<dbReference type="KEGG" id="sam:MW0470"/>
<dbReference type="HOGENOM" id="CLU_112632_1_3_9"/>
<dbReference type="UniPathway" id="UPA00077">
    <property type="reaction ID" value="UER00154"/>
</dbReference>
<dbReference type="GO" id="GO:0005737">
    <property type="term" value="C:cytoplasm"/>
    <property type="evidence" value="ECO:0007669"/>
    <property type="project" value="TreeGrafter"/>
</dbReference>
<dbReference type="GO" id="GO:0004150">
    <property type="term" value="F:dihydroneopterin aldolase activity"/>
    <property type="evidence" value="ECO:0007669"/>
    <property type="project" value="UniProtKB-EC"/>
</dbReference>
<dbReference type="GO" id="GO:0016853">
    <property type="term" value="F:isomerase activity"/>
    <property type="evidence" value="ECO:0007669"/>
    <property type="project" value="UniProtKB-KW"/>
</dbReference>
<dbReference type="GO" id="GO:0046656">
    <property type="term" value="P:folic acid biosynthetic process"/>
    <property type="evidence" value="ECO:0007669"/>
    <property type="project" value="UniProtKB-KW"/>
</dbReference>
<dbReference type="GO" id="GO:0046654">
    <property type="term" value="P:tetrahydrofolate biosynthetic process"/>
    <property type="evidence" value="ECO:0007669"/>
    <property type="project" value="UniProtKB-UniPathway"/>
</dbReference>
<dbReference type="CDD" id="cd00534">
    <property type="entry name" value="DHNA_DHNTPE"/>
    <property type="match status" value="1"/>
</dbReference>
<dbReference type="FunFam" id="3.30.1130.10:FF:000003">
    <property type="entry name" value="7,8-dihydroneopterin aldolase"/>
    <property type="match status" value="1"/>
</dbReference>
<dbReference type="Gene3D" id="3.30.1130.10">
    <property type="match status" value="1"/>
</dbReference>
<dbReference type="InterPro" id="IPR006156">
    <property type="entry name" value="Dihydroneopterin_aldolase"/>
</dbReference>
<dbReference type="InterPro" id="IPR006157">
    <property type="entry name" value="FolB_dom"/>
</dbReference>
<dbReference type="InterPro" id="IPR043133">
    <property type="entry name" value="GTP-CH-I_C/QueF"/>
</dbReference>
<dbReference type="NCBIfam" id="TIGR00525">
    <property type="entry name" value="folB"/>
    <property type="match status" value="1"/>
</dbReference>
<dbReference type="NCBIfam" id="TIGR00526">
    <property type="entry name" value="folB_dom"/>
    <property type="match status" value="1"/>
</dbReference>
<dbReference type="PANTHER" id="PTHR42844">
    <property type="entry name" value="DIHYDRONEOPTERIN ALDOLASE 1-RELATED"/>
    <property type="match status" value="1"/>
</dbReference>
<dbReference type="PANTHER" id="PTHR42844:SF1">
    <property type="entry name" value="DIHYDRONEOPTERIN ALDOLASE 1-RELATED"/>
    <property type="match status" value="1"/>
</dbReference>
<dbReference type="Pfam" id="PF02152">
    <property type="entry name" value="FolB"/>
    <property type="match status" value="1"/>
</dbReference>
<dbReference type="SMART" id="SM00905">
    <property type="entry name" value="FolB"/>
    <property type="match status" value="1"/>
</dbReference>
<dbReference type="SUPFAM" id="SSF55620">
    <property type="entry name" value="Tetrahydrobiopterin biosynthesis enzymes-like"/>
    <property type="match status" value="1"/>
</dbReference>
<gene>
    <name type="primary">folB</name>
    <name type="ordered locus">MW0470</name>
</gene>